<comment type="function">
    <text evidence="1">Low-potential electron donor to a number of redox enzymes.</text>
</comment>
<comment type="cofactor">
    <cofactor evidence="1">
        <name>FMN</name>
        <dbReference type="ChEBI" id="CHEBI:58210"/>
    </cofactor>
</comment>
<comment type="similarity">
    <text evidence="3">Belongs to the flavodoxin family.</text>
</comment>
<reference key="1">
    <citation type="journal article" date="2003" name="Proc. Natl. Acad. Sci. U.S.A.">
        <title>Reductive genome evolution in Buchnera aphidicola.</title>
        <authorList>
            <person name="van Ham R.C.H.J."/>
            <person name="Kamerbeek J."/>
            <person name="Palacios C."/>
            <person name="Rausell C."/>
            <person name="Abascal F."/>
            <person name="Bastolla U."/>
            <person name="Fernandez J.M."/>
            <person name="Jimenez L."/>
            <person name="Postigo M."/>
            <person name="Silva F.J."/>
            <person name="Tamames J."/>
            <person name="Viguera E."/>
            <person name="Latorre A."/>
            <person name="Valencia A."/>
            <person name="Moran F."/>
            <person name="Moya A."/>
        </authorList>
    </citation>
    <scope>NUCLEOTIDE SEQUENCE [LARGE SCALE GENOMIC DNA]</scope>
    <source>
        <strain>Bp</strain>
    </source>
</reference>
<evidence type="ECO:0000250" key="1"/>
<evidence type="ECO:0000255" key="2">
    <source>
        <dbReference type="PROSITE-ProRule" id="PRU00088"/>
    </source>
</evidence>
<evidence type="ECO:0000305" key="3"/>
<protein>
    <recommendedName>
        <fullName>Flavodoxin</fullName>
    </recommendedName>
</protein>
<dbReference type="EMBL" id="AE016826">
    <property type="protein sequence ID" value="AAO27002.1"/>
    <property type="molecule type" value="Genomic_DNA"/>
</dbReference>
<dbReference type="RefSeq" id="WP_011091403.1">
    <property type="nucleotide sequence ID" value="NC_004545.1"/>
</dbReference>
<dbReference type="SMR" id="Q89AK0"/>
<dbReference type="KEGG" id="bab:bbp_277"/>
<dbReference type="eggNOG" id="COG0716">
    <property type="taxonomic scope" value="Bacteria"/>
</dbReference>
<dbReference type="HOGENOM" id="CLU_051402_1_1_6"/>
<dbReference type="OrthoDB" id="359268at2"/>
<dbReference type="Proteomes" id="UP000000601">
    <property type="component" value="Chromosome"/>
</dbReference>
<dbReference type="GO" id="GO:0009055">
    <property type="term" value="F:electron transfer activity"/>
    <property type="evidence" value="ECO:0007669"/>
    <property type="project" value="InterPro"/>
</dbReference>
<dbReference type="GO" id="GO:0010181">
    <property type="term" value="F:FMN binding"/>
    <property type="evidence" value="ECO:0007669"/>
    <property type="project" value="InterPro"/>
</dbReference>
<dbReference type="Gene3D" id="3.40.50.360">
    <property type="match status" value="1"/>
</dbReference>
<dbReference type="InterPro" id="IPR050619">
    <property type="entry name" value="Flavodoxin"/>
</dbReference>
<dbReference type="InterPro" id="IPR008254">
    <property type="entry name" value="Flavodoxin/NO_synth"/>
</dbReference>
<dbReference type="InterPro" id="IPR001226">
    <property type="entry name" value="Flavodoxin_CS"/>
</dbReference>
<dbReference type="InterPro" id="IPR010086">
    <property type="entry name" value="Flavodoxin_lc"/>
</dbReference>
<dbReference type="InterPro" id="IPR029039">
    <property type="entry name" value="Flavoprotein-like_sf"/>
</dbReference>
<dbReference type="NCBIfam" id="TIGR01752">
    <property type="entry name" value="flav_long"/>
    <property type="match status" value="1"/>
</dbReference>
<dbReference type="NCBIfam" id="NF006737">
    <property type="entry name" value="PRK09267.1-3"/>
    <property type="match status" value="1"/>
</dbReference>
<dbReference type="NCBIfam" id="NF006739">
    <property type="entry name" value="PRK09267.1-5"/>
    <property type="match status" value="1"/>
</dbReference>
<dbReference type="PANTHER" id="PTHR42809:SF1">
    <property type="entry name" value="FLAVODOXIN 1"/>
    <property type="match status" value="1"/>
</dbReference>
<dbReference type="PANTHER" id="PTHR42809">
    <property type="entry name" value="FLAVODOXIN 2"/>
    <property type="match status" value="1"/>
</dbReference>
<dbReference type="Pfam" id="PF00258">
    <property type="entry name" value="Flavodoxin_1"/>
    <property type="match status" value="1"/>
</dbReference>
<dbReference type="PIRSF" id="PIRSF038996">
    <property type="entry name" value="FldA"/>
    <property type="match status" value="1"/>
</dbReference>
<dbReference type="SUPFAM" id="SSF52218">
    <property type="entry name" value="Flavoproteins"/>
    <property type="match status" value="1"/>
</dbReference>
<dbReference type="PROSITE" id="PS00201">
    <property type="entry name" value="FLAVODOXIN"/>
    <property type="match status" value="1"/>
</dbReference>
<dbReference type="PROSITE" id="PS50902">
    <property type="entry name" value="FLAVODOXIN_LIKE"/>
    <property type="match status" value="1"/>
</dbReference>
<accession>Q89AK0</accession>
<gene>
    <name type="primary">fldA</name>
    <name type="ordered locus">bbp_277</name>
</gene>
<name>FLAV_BUCBP</name>
<keyword id="KW-0249">Electron transport</keyword>
<keyword id="KW-0285">Flavoprotein</keyword>
<keyword id="KW-0288">FMN</keyword>
<keyword id="KW-1185">Reference proteome</keyword>
<keyword id="KW-0813">Transport</keyword>
<organism>
    <name type="scientific">Buchnera aphidicola subsp. Baizongia pistaciae (strain Bp)</name>
    <dbReference type="NCBI Taxonomy" id="224915"/>
    <lineage>
        <taxon>Bacteria</taxon>
        <taxon>Pseudomonadati</taxon>
        <taxon>Pseudomonadota</taxon>
        <taxon>Gammaproteobacteria</taxon>
        <taxon>Enterobacterales</taxon>
        <taxon>Erwiniaceae</taxon>
        <taxon>Buchnera</taxon>
    </lineage>
</organism>
<proteinExistence type="inferred from homology"/>
<feature type="chain" id="PRO_0000171611" description="Flavodoxin">
    <location>
        <begin position="1"/>
        <end position="174"/>
    </location>
</feature>
<feature type="domain" description="Flavodoxin-like" evidence="2">
    <location>
        <begin position="4"/>
        <end position="166"/>
    </location>
</feature>
<sequence>MESIGIFFGSDTGNTENVAKLIHKYIGTNISSIHDIANTNKKDIELFNILIFGVSTWYYGELQCDWDDFLPTLKKINFNNKIIALFGCGDQEDYSEYFCDGIGILYNVIRLSKNVRFIGSWTSKGYSFECSKALDKNKNFLGLVIDEDRQPEQSNQRIIQWTKKIKTELNSLLN</sequence>